<dbReference type="EC" id="2.1.1.176"/>
<dbReference type="EMBL" id="AE016853">
    <property type="protein sequence ID" value="AAO53733.1"/>
    <property type="molecule type" value="Genomic_DNA"/>
</dbReference>
<dbReference type="RefSeq" id="NP_790038.1">
    <property type="nucleotide sequence ID" value="NC_004578.1"/>
</dbReference>
<dbReference type="RefSeq" id="WP_011103025.1">
    <property type="nucleotide sequence ID" value="NC_004578.1"/>
</dbReference>
<dbReference type="SMR" id="Q88B41"/>
<dbReference type="STRING" id="223283.PSPTO_0179"/>
<dbReference type="GeneID" id="1181787"/>
<dbReference type="KEGG" id="pst:PSPTO_0179"/>
<dbReference type="PATRIC" id="fig|223283.9.peg.185"/>
<dbReference type="eggNOG" id="COG0144">
    <property type="taxonomic scope" value="Bacteria"/>
</dbReference>
<dbReference type="HOGENOM" id="CLU_005316_0_4_6"/>
<dbReference type="OrthoDB" id="9810297at2"/>
<dbReference type="PhylomeDB" id="Q88B41"/>
<dbReference type="Proteomes" id="UP000002515">
    <property type="component" value="Chromosome"/>
</dbReference>
<dbReference type="GO" id="GO:0005829">
    <property type="term" value="C:cytosol"/>
    <property type="evidence" value="ECO:0007669"/>
    <property type="project" value="TreeGrafter"/>
</dbReference>
<dbReference type="GO" id="GO:0003723">
    <property type="term" value="F:RNA binding"/>
    <property type="evidence" value="ECO:0007669"/>
    <property type="project" value="UniProtKB-KW"/>
</dbReference>
<dbReference type="GO" id="GO:0009383">
    <property type="term" value="F:rRNA (cytosine-C5-)-methyltransferase activity"/>
    <property type="evidence" value="ECO:0007669"/>
    <property type="project" value="TreeGrafter"/>
</dbReference>
<dbReference type="GO" id="GO:0006355">
    <property type="term" value="P:regulation of DNA-templated transcription"/>
    <property type="evidence" value="ECO:0007669"/>
    <property type="project" value="InterPro"/>
</dbReference>
<dbReference type="GO" id="GO:0070475">
    <property type="term" value="P:rRNA base methylation"/>
    <property type="evidence" value="ECO:0007669"/>
    <property type="project" value="TreeGrafter"/>
</dbReference>
<dbReference type="CDD" id="cd02440">
    <property type="entry name" value="AdoMet_MTases"/>
    <property type="match status" value="1"/>
</dbReference>
<dbReference type="FunFam" id="3.30.70.1170:FF:000002">
    <property type="entry name" value="Ribosomal RNA small subunit methyltransferase B"/>
    <property type="match status" value="1"/>
</dbReference>
<dbReference type="FunFam" id="3.40.50.150:FF:000022">
    <property type="entry name" value="Ribosomal RNA small subunit methyltransferase B"/>
    <property type="match status" value="1"/>
</dbReference>
<dbReference type="Gene3D" id="1.10.287.730">
    <property type="entry name" value="Helix hairpin bin"/>
    <property type="match status" value="1"/>
</dbReference>
<dbReference type="Gene3D" id="1.10.940.10">
    <property type="entry name" value="NusB-like"/>
    <property type="match status" value="1"/>
</dbReference>
<dbReference type="Gene3D" id="3.30.70.1170">
    <property type="entry name" value="Sun protein, domain 3"/>
    <property type="match status" value="1"/>
</dbReference>
<dbReference type="Gene3D" id="3.40.50.150">
    <property type="entry name" value="Vaccinia Virus protein VP39"/>
    <property type="match status" value="1"/>
</dbReference>
<dbReference type="InterPro" id="IPR049560">
    <property type="entry name" value="MeTrfase_RsmB-F_NOP2_cat"/>
</dbReference>
<dbReference type="InterPro" id="IPR001678">
    <property type="entry name" value="MeTrfase_RsmB-F_NOP2_dom"/>
</dbReference>
<dbReference type="InterPro" id="IPR035926">
    <property type="entry name" value="NusB-like_sf"/>
</dbReference>
<dbReference type="InterPro" id="IPR006027">
    <property type="entry name" value="NusB_RsmB_TIM44"/>
</dbReference>
<dbReference type="InterPro" id="IPR023267">
    <property type="entry name" value="RCMT"/>
</dbReference>
<dbReference type="InterPro" id="IPR004573">
    <property type="entry name" value="rRNA_ssu_MeTfrase_B"/>
</dbReference>
<dbReference type="InterPro" id="IPR054728">
    <property type="entry name" value="RsmB-like_ferredoxin"/>
</dbReference>
<dbReference type="InterPro" id="IPR018314">
    <property type="entry name" value="RsmB/NOL1/NOP2-like_CS"/>
</dbReference>
<dbReference type="InterPro" id="IPR029063">
    <property type="entry name" value="SAM-dependent_MTases_sf"/>
</dbReference>
<dbReference type="NCBIfam" id="NF008149">
    <property type="entry name" value="PRK10901.1"/>
    <property type="match status" value="1"/>
</dbReference>
<dbReference type="NCBIfam" id="TIGR00563">
    <property type="entry name" value="rsmB"/>
    <property type="match status" value="1"/>
</dbReference>
<dbReference type="PANTHER" id="PTHR22807:SF61">
    <property type="entry name" value="NOL1_NOP2_SUN FAMILY PROTEIN _ ANTITERMINATION NUSB DOMAIN-CONTAINING PROTEIN"/>
    <property type="match status" value="1"/>
</dbReference>
<dbReference type="PANTHER" id="PTHR22807">
    <property type="entry name" value="NOP2 YEAST -RELATED NOL1/NOP2/FMU SUN DOMAIN-CONTAINING"/>
    <property type="match status" value="1"/>
</dbReference>
<dbReference type="Pfam" id="PF01189">
    <property type="entry name" value="Methyltr_RsmB-F"/>
    <property type="match status" value="1"/>
</dbReference>
<dbReference type="Pfam" id="PF01029">
    <property type="entry name" value="NusB"/>
    <property type="match status" value="1"/>
</dbReference>
<dbReference type="Pfam" id="PF22458">
    <property type="entry name" value="RsmF-B_ferredox"/>
    <property type="match status" value="1"/>
</dbReference>
<dbReference type="PRINTS" id="PR02008">
    <property type="entry name" value="RCMTFAMILY"/>
</dbReference>
<dbReference type="SUPFAM" id="SSF48013">
    <property type="entry name" value="NusB-like"/>
    <property type="match status" value="1"/>
</dbReference>
<dbReference type="SUPFAM" id="SSF53335">
    <property type="entry name" value="S-adenosyl-L-methionine-dependent methyltransferases"/>
    <property type="match status" value="1"/>
</dbReference>
<dbReference type="PROSITE" id="PS01153">
    <property type="entry name" value="NOL1_NOP2_SUN"/>
    <property type="match status" value="1"/>
</dbReference>
<dbReference type="PROSITE" id="PS51686">
    <property type="entry name" value="SAM_MT_RSMB_NOP"/>
    <property type="match status" value="1"/>
</dbReference>
<name>RSMB_PSESM</name>
<feature type="chain" id="PRO_0000211801" description="Ribosomal RNA small subunit methyltransferase B">
    <location>
        <begin position="1"/>
        <end position="448"/>
    </location>
</feature>
<feature type="active site" description="Nucleophile" evidence="2">
    <location>
        <position position="373"/>
    </location>
</feature>
<feature type="binding site" evidence="2">
    <location>
        <begin position="251"/>
        <end position="257"/>
    </location>
    <ligand>
        <name>S-adenosyl-L-methionine</name>
        <dbReference type="ChEBI" id="CHEBI:59789"/>
    </ligand>
</feature>
<feature type="binding site" evidence="2">
    <location>
        <position position="275"/>
    </location>
    <ligand>
        <name>S-adenosyl-L-methionine</name>
        <dbReference type="ChEBI" id="CHEBI:59789"/>
    </ligand>
</feature>
<feature type="binding site" evidence="2">
    <location>
        <position position="301"/>
    </location>
    <ligand>
        <name>S-adenosyl-L-methionine</name>
        <dbReference type="ChEBI" id="CHEBI:59789"/>
    </ligand>
</feature>
<feature type="binding site" evidence="2">
    <location>
        <position position="320"/>
    </location>
    <ligand>
        <name>S-adenosyl-L-methionine</name>
        <dbReference type="ChEBI" id="CHEBI:59789"/>
    </ligand>
</feature>
<keyword id="KW-0963">Cytoplasm</keyword>
<keyword id="KW-0489">Methyltransferase</keyword>
<keyword id="KW-1185">Reference proteome</keyword>
<keyword id="KW-0690">Ribosome biogenesis</keyword>
<keyword id="KW-0694">RNA-binding</keyword>
<keyword id="KW-0698">rRNA processing</keyword>
<keyword id="KW-0949">S-adenosyl-L-methionine</keyword>
<keyword id="KW-0808">Transferase</keyword>
<proteinExistence type="inferred from homology"/>
<reference key="1">
    <citation type="journal article" date="2003" name="Proc. Natl. Acad. Sci. U.S.A.">
        <title>The complete genome sequence of the Arabidopsis and tomato pathogen Pseudomonas syringae pv. tomato DC3000.</title>
        <authorList>
            <person name="Buell C.R."/>
            <person name="Joardar V."/>
            <person name="Lindeberg M."/>
            <person name="Selengut J."/>
            <person name="Paulsen I.T."/>
            <person name="Gwinn M.L."/>
            <person name="Dodson R.J."/>
            <person name="DeBoy R.T."/>
            <person name="Durkin A.S."/>
            <person name="Kolonay J.F."/>
            <person name="Madupu R."/>
            <person name="Daugherty S.C."/>
            <person name="Brinkac L.M."/>
            <person name="Beanan M.J."/>
            <person name="Haft D.H."/>
            <person name="Nelson W.C."/>
            <person name="Davidsen T.M."/>
            <person name="Zafar N."/>
            <person name="Zhou L."/>
            <person name="Liu J."/>
            <person name="Yuan Q."/>
            <person name="Khouri H.M."/>
            <person name="Fedorova N.B."/>
            <person name="Tran B."/>
            <person name="Russell D."/>
            <person name="Berry K.J."/>
            <person name="Utterback T.R."/>
            <person name="Van Aken S.E."/>
            <person name="Feldblyum T.V."/>
            <person name="D'Ascenzo M."/>
            <person name="Deng W.-L."/>
            <person name="Ramos A.R."/>
            <person name="Alfano J.R."/>
            <person name="Cartinhour S."/>
            <person name="Chatterjee A.K."/>
            <person name="Delaney T.P."/>
            <person name="Lazarowitz S.G."/>
            <person name="Martin G.B."/>
            <person name="Schneider D.J."/>
            <person name="Tang X."/>
            <person name="Bender C.L."/>
            <person name="White O."/>
            <person name="Fraser C.M."/>
            <person name="Collmer A."/>
        </authorList>
    </citation>
    <scope>NUCLEOTIDE SEQUENCE [LARGE SCALE GENOMIC DNA]</scope>
    <source>
        <strain>ATCC BAA-871 / DC3000</strain>
    </source>
</reference>
<sequence>MNPRLAAAKALAAVLSGKASLNSSLPTQLDKVELRDRGLTQDLAFGTARWQPRLSALAAKLLQKPFKAADADVEALLLVGLYQLFYSRIPAHAAIGETVGCADKLKKPWAKGLLNAVLRNAQRDGEALLIELEHDPVVRTAHPRWLQKALKAAWPEQWEAICAANNAHPPMILRVNRRHQRRDQYLELLKTAGLEASACTFSQDGIVLAEPCDVRSLPGFAEGWISVQDEAAQLAADLLELAPGQRVLDACCAPGGKTCHLLEVQPQLSGVVAVDLEAKRLVRVRENLERLGLDAELIAADARETAQWWDGKPFQRILLDAPCSATGVIRRHPDIKLTRQLDDIAALATLQGELLDALWPTLQVGGMLVYATCSTLPTENTDVIEAFLARTSGARELDIAGQAGQPPAGIKQPHGRQLLAQQGGHDGFYYAKLIKIAAQDRGGAGVTS</sequence>
<protein>
    <recommendedName>
        <fullName>Ribosomal RNA small subunit methyltransferase B</fullName>
        <ecNumber>2.1.1.176</ecNumber>
    </recommendedName>
    <alternativeName>
        <fullName>16S rRNA m5C967 methyltransferase</fullName>
    </alternativeName>
    <alternativeName>
        <fullName>rRNA (cytosine-C(5)-)-methyltransferase RsmB</fullName>
    </alternativeName>
</protein>
<gene>
    <name type="primary">rsmB</name>
    <name type="synonym">rrmB</name>
    <name type="synonym">sun</name>
    <name type="ordered locus">PSPTO_0179</name>
</gene>
<evidence type="ECO:0000250" key="1"/>
<evidence type="ECO:0000255" key="2">
    <source>
        <dbReference type="PROSITE-ProRule" id="PRU01023"/>
    </source>
</evidence>
<evidence type="ECO:0000305" key="3"/>
<organism>
    <name type="scientific">Pseudomonas syringae pv. tomato (strain ATCC BAA-871 / DC3000)</name>
    <dbReference type="NCBI Taxonomy" id="223283"/>
    <lineage>
        <taxon>Bacteria</taxon>
        <taxon>Pseudomonadati</taxon>
        <taxon>Pseudomonadota</taxon>
        <taxon>Gammaproteobacteria</taxon>
        <taxon>Pseudomonadales</taxon>
        <taxon>Pseudomonadaceae</taxon>
        <taxon>Pseudomonas</taxon>
    </lineage>
</organism>
<accession>Q88B41</accession>
<comment type="function">
    <text evidence="1">Specifically methylates the cytosine at position 967 (m5C967) of 16S rRNA.</text>
</comment>
<comment type="catalytic activity">
    <reaction>
        <text>cytidine(967) in 16S rRNA + S-adenosyl-L-methionine = 5-methylcytidine(967) in 16S rRNA + S-adenosyl-L-homocysteine + H(+)</text>
        <dbReference type="Rhea" id="RHEA:42748"/>
        <dbReference type="Rhea" id="RHEA-COMP:10219"/>
        <dbReference type="Rhea" id="RHEA-COMP:10220"/>
        <dbReference type="ChEBI" id="CHEBI:15378"/>
        <dbReference type="ChEBI" id="CHEBI:57856"/>
        <dbReference type="ChEBI" id="CHEBI:59789"/>
        <dbReference type="ChEBI" id="CHEBI:74483"/>
        <dbReference type="ChEBI" id="CHEBI:82748"/>
        <dbReference type="EC" id="2.1.1.176"/>
    </reaction>
</comment>
<comment type="subcellular location">
    <subcellularLocation>
        <location evidence="3">Cytoplasm</location>
    </subcellularLocation>
</comment>
<comment type="similarity">
    <text evidence="2">Belongs to the class I-like SAM-binding methyltransferase superfamily. RsmB/NOP family.</text>
</comment>